<organism>
    <name type="scientific">Burkholderia mallei (strain NCTC 10229)</name>
    <dbReference type="NCBI Taxonomy" id="412022"/>
    <lineage>
        <taxon>Bacteria</taxon>
        <taxon>Pseudomonadati</taxon>
        <taxon>Pseudomonadota</taxon>
        <taxon>Betaproteobacteria</taxon>
        <taxon>Burkholderiales</taxon>
        <taxon>Burkholderiaceae</taxon>
        <taxon>Burkholderia</taxon>
        <taxon>pseudomallei group</taxon>
    </lineage>
</organism>
<dbReference type="EC" id="5.1.3.20" evidence="1"/>
<dbReference type="EMBL" id="CP000546">
    <property type="protein sequence ID" value="ABN00618.1"/>
    <property type="molecule type" value="Genomic_DNA"/>
</dbReference>
<dbReference type="SMR" id="A2S4R1"/>
<dbReference type="KEGG" id="bml:BMA10229_A0940"/>
<dbReference type="HOGENOM" id="CLU_007383_1_3_4"/>
<dbReference type="UniPathway" id="UPA00356">
    <property type="reaction ID" value="UER00440"/>
</dbReference>
<dbReference type="Proteomes" id="UP000002283">
    <property type="component" value="Chromosome I"/>
</dbReference>
<dbReference type="GO" id="GO:0008712">
    <property type="term" value="F:ADP-glyceromanno-heptose 6-epimerase activity"/>
    <property type="evidence" value="ECO:0007669"/>
    <property type="project" value="UniProtKB-UniRule"/>
</dbReference>
<dbReference type="GO" id="GO:0050661">
    <property type="term" value="F:NADP binding"/>
    <property type="evidence" value="ECO:0007669"/>
    <property type="project" value="InterPro"/>
</dbReference>
<dbReference type="GO" id="GO:0097171">
    <property type="term" value="P:ADP-L-glycero-beta-D-manno-heptose biosynthetic process"/>
    <property type="evidence" value="ECO:0007669"/>
    <property type="project" value="UniProtKB-UniPathway"/>
</dbReference>
<dbReference type="GO" id="GO:0005975">
    <property type="term" value="P:carbohydrate metabolic process"/>
    <property type="evidence" value="ECO:0007669"/>
    <property type="project" value="UniProtKB-UniRule"/>
</dbReference>
<dbReference type="CDD" id="cd05248">
    <property type="entry name" value="ADP_GME_SDR_e"/>
    <property type="match status" value="1"/>
</dbReference>
<dbReference type="Gene3D" id="3.40.50.720">
    <property type="entry name" value="NAD(P)-binding Rossmann-like Domain"/>
    <property type="match status" value="1"/>
</dbReference>
<dbReference type="Gene3D" id="3.90.25.10">
    <property type="entry name" value="UDP-galactose 4-epimerase, domain 1"/>
    <property type="match status" value="1"/>
</dbReference>
<dbReference type="HAMAP" id="MF_01601">
    <property type="entry name" value="Heptose_epimerase"/>
    <property type="match status" value="1"/>
</dbReference>
<dbReference type="InterPro" id="IPR001509">
    <property type="entry name" value="Epimerase_deHydtase"/>
</dbReference>
<dbReference type="InterPro" id="IPR011912">
    <property type="entry name" value="Heptose_epim"/>
</dbReference>
<dbReference type="InterPro" id="IPR036291">
    <property type="entry name" value="NAD(P)-bd_dom_sf"/>
</dbReference>
<dbReference type="NCBIfam" id="TIGR02197">
    <property type="entry name" value="heptose_epim"/>
    <property type="match status" value="1"/>
</dbReference>
<dbReference type="PANTHER" id="PTHR43103:SF3">
    <property type="entry name" value="ADP-L-GLYCERO-D-MANNO-HEPTOSE-6-EPIMERASE"/>
    <property type="match status" value="1"/>
</dbReference>
<dbReference type="PANTHER" id="PTHR43103">
    <property type="entry name" value="NUCLEOSIDE-DIPHOSPHATE-SUGAR EPIMERASE"/>
    <property type="match status" value="1"/>
</dbReference>
<dbReference type="Pfam" id="PF01370">
    <property type="entry name" value="Epimerase"/>
    <property type="match status" value="1"/>
</dbReference>
<dbReference type="SUPFAM" id="SSF51735">
    <property type="entry name" value="NAD(P)-binding Rossmann-fold domains"/>
    <property type="match status" value="1"/>
</dbReference>
<evidence type="ECO:0000255" key="1">
    <source>
        <dbReference type="HAMAP-Rule" id="MF_01601"/>
    </source>
</evidence>
<comment type="function">
    <text evidence="1">Catalyzes the interconversion between ADP-D-glycero-beta-D-manno-heptose and ADP-L-glycero-beta-D-manno-heptose via an epimerization at carbon 6 of the heptose.</text>
</comment>
<comment type="catalytic activity">
    <reaction evidence="1">
        <text>ADP-D-glycero-beta-D-manno-heptose = ADP-L-glycero-beta-D-manno-heptose</text>
        <dbReference type="Rhea" id="RHEA:17577"/>
        <dbReference type="ChEBI" id="CHEBI:59967"/>
        <dbReference type="ChEBI" id="CHEBI:61506"/>
        <dbReference type="EC" id="5.1.3.20"/>
    </reaction>
</comment>
<comment type="cofactor">
    <cofactor evidence="1">
        <name>NADP(+)</name>
        <dbReference type="ChEBI" id="CHEBI:58349"/>
    </cofactor>
    <text evidence="1">Binds 1 NADP(+) per subunit.</text>
</comment>
<comment type="pathway">
    <text evidence="1">Nucleotide-sugar biosynthesis; ADP-L-glycero-beta-D-manno-heptose biosynthesis; ADP-L-glycero-beta-D-manno-heptose from D-glycero-beta-D-manno-heptose 7-phosphate: step 4/4.</text>
</comment>
<comment type="subunit">
    <text evidence="1">Homopentamer.</text>
</comment>
<comment type="domain">
    <text evidence="1">Contains a large N-terminal NADP-binding domain, and a smaller C-terminal substrate-binding domain.</text>
</comment>
<comment type="similarity">
    <text evidence="1">Belongs to the NAD(P)-dependent epimerase/dehydratase family. HldD subfamily.</text>
</comment>
<protein>
    <recommendedName>
        <fullName evidence="1">ADP-L-glycero-D-manno-heptose-6-epimerase</fullName>
        <ecNumber evidence="1">5.1.3.20</ecNumber>
    </recommendedName>
    <alternativeName>
        <fullName evidence="1">ADP-L-glycero-beta-D-manno-heptose-6-epimerase</fullName>
        <shortName evidence="1">ADP-glyceromanno-heptose 6-epimerase</shortName>
        <shortName evidence="1">ADP-hep 6-epimerase</shortName>
        <shortName evidence="1">AGME</shortName>
    </alternativeName>
</protein>
<sequence length="330" mass="37046">MTLIVTGAAGFIGANIVKALNERGETRIIAVDNLTRADKFKNLVDCEIDDYLDKTEFVERFARGDFGKVRAVFHEGACSDTMETDGRYMMDNNFRYSRAVLDACLAQGTQFLYASSAAIYGGSSRFVEAREFEAPLNVYGYSKFLFDQVIRRVMPSAKSQIAGFRYFNVYGPRESHKGRMASVAFHNFNQFRAEGKVKLFGEYNGYGPGEQTRDFVSVEDVAKVNLHFFDHPQKSGIFNLGTGRAQPFNDIATTVVNTLRALEGQPALTLAEQVEQGLVEYVPFPDALRGKYQCFTQADQTKLRAAGYDAPFLTVQEGVDRYVRWLFGQL</sequence>
<keyword id="KW-0119">Carbohydrate metabolism</keyword>
<keyword id="KW-0413">Isomerase</keyword>
<keyword id="KW-0521">NADP</keyword>
<feature type="chain" id="PRO_1000069346" description="ADP-L-glycero-D-manno-heptose-6-epimerase">
    <location>
        <begin position="1"/>
        <end position="330"/>
    </location>
</feature>
<feature type="active site" description="Proton acceptor" evidence="1">
    <location>
        <position position="139"/>
    </location>
</feature>
<feature type="active site" description="Proton acceptor" evidence="1">
    <location>
        <position position="177"/>
    </location>
</feature>
<feature type="binding site" evidence="1">
    <location>
        <begin position="11"/>
        <end position="12"/>
    </location>
    <ligand>
        <name>NADP(+)</name>
        <dbReference type="ChEBI" id="CHEBI:58349"/>
    </ligand>
</feature>
<feature type="binding site" evidence="1">
    <location>
        <begin position="32"/>
        <end position="33"/>
    </location>
    <ligand>
        <name>NADP(+)</name>
        <dbReference type="ChEBI" id="CHEBI:58349"/>
    </ligand>
</feature>
<feature type="binding site" evidence="1">
    <location>
        <position position="39"/>
    </location>
    <ligand>
        <name>NADP(+)</name>
        <dbReference type="ChEBI" id="CHEBI:58349"/>
    </ligand>
</feature>
<feature type="binding site" evidence="1">
    <location>
        <position position="54"/>
    </location>
    <ligand>
        <name>NADP(+)</name>
        <dbReference type="ChEBI" id="CHEBI:58349"/>
    </ligand>
</feature>
<feature type="binding site" evidence="1">
    <location>
        <begin position="75"/>
        <end position="79"/>
    </location>
    <ligand>
        <name>NADP(+)</name>
        <dbReference type="ChEBI" id="CHEBI:58349"/>
    </ligand>
</feature>
<feature type="binding site" evidence="1">
    <location>
        <position position="92"/>
    </location>
    <ligand>
        <name>NADP(+)</name>
        <dbReference type="ChEBI" id="CHEBI:58349"/>
    </ligand>
</feature>
<feature type="binding site" evidence="1">
    <location>
        <position position="143"/>
    </location>
    <ligand>
        <name>NADP(+)</name>
        <dbReference type="ChEBI" id="CHEBI:58349"/>
    </ligand>
</feature>
<feature type="binding site" evidence="1">
    <location>
        <position position="168"/>
    </location>
    <ligand>
        <name>substrate</name>
    </ligand>
</feature>
<feature type="binding site" evidence="1">
    <location>
        <position position="169"/>
    </location>
    <ligand>
        <name>NADP(+)</name>
        <dbReference type="ChEBI" id="CHEBI:58349"/>
    </ligand>
</feature>
<feature type="binding site" evidence="1">
    <location>
        <position position="177"/>
    </location>
    <ligand>
        <name>NADP(+)</name>
        <dbReference type="ChEBI" id="CHEBI:58349"/>
    </ligand>
</feature>
<feature type="binding site" evidence="1">
    <location>
        <position position="179"/>
    </location>
    <ligand>
        <name>substrate</name>
    </ligand>
</feature>
<feature type="binding site" evidence="1">
    <location>
        <position position="186"/>
    </location>
    <ligand>
        <name>substrate</name>
    </ligand>
</feature>
<feature type="binding site" evidence="1">
    <location>
        <begin position="200"/>
        <end position="203"/>
    </location>
    <ligand>
        <name>substrate</name>
    </ligand>
</feature>
<feature type="binding site" evidence="1">
    <location>
        <position position="213"/>
    </location>
    <ligand>
        <name>substrate</name>
    </ligand>
</feature>
<feature type="binding site" evidence="1">
    <location>
        <position position="292"/>
    </location>
    <ligand>
        <name>substrate</name>
    </ligand>
</feature>
<proteinExistence type="inferred from homology"/>
<accession>A2S4R1</accession>
<name>HLDD_BURM9</name>
<gene>
    <name evidence="1" type="primary">hldD</name>
    <name type="ordered locus">BMA10229_A0940</name>
</gene>
<reference key="1">
    <citation type="journal article" date="2010" name="Genome Biol. Evol.">
        <title>Continuing evolution of Burkholderia mallei through genome reduction and large-scale rearrangements.</title>
        <authorList>
            <person name="Losada L."/>
            <person name="Ronning C.M."/>
            <person name="DeShazer D."/>
            <person name="Woods D."/>
            <person name="Fedorova N."/>
            <person name="Kim H.S."/>
            <person name="Shabalina S.A."/>
            <person name="Pearson T.R."/>
            <person name="Brinkac L."/>
            <person name="Tan P."/>
            <person name="Nandi T."/>
            <person name="Crabtree J."/>
            <person name="Badger J."/>
            <person name="Beckstrom-Sternberg S."/>
            <person name="Saqib M."/>
            <person name="Schutzer S.E."/>
            <person name="Keim P."/>
            <person name="Nierman W.C."/>
        </authorList>
    </citation>
    <scope>NUCLEOTIDE SEQUENCE [LARGE SCALE GENOMIC DNA]</scope>
    <source>
        <strain>NCTC 10229</strain>
    </source>
</reference>